<dbReference type="EC" id="3.4.21.-"/>
<dbReference type="EMBL" id="AJ306593">
    <property type="protein sequence ID" value="CAC35467.1"/>
    <property type="molecule type" value="mRNA"/>
</dbReference>
<dbReference type="EMBL" id="AB056161">
    <property type="protein sequence ID" value="BAB85497.1"/>
    <property type="molecule type" value="mRNA"/>
</dbReference>
<dbReference type="EMBL" id="AY030095">
    <property type="protein sequence ID" value="AAK38168.1"/>
    <property type="molecule type" value="mRNA"/>
</dbReference>
<dbReference type="EMBL" id="AY359106">
    <property type="protein sequence ID" value="AAQ89464.1"/>
    <property type="molecule type" value="mRNA"/>
</dbReference>
<dbReference type="EMBL" id="BC034294">
    <property type="protein sequence ID" value="AAH34294.1"/>
    <property type="molecule type" value="mRNA"/>
</dbReference>
<dbReference type="CCDS" id="CCDS10476.1"/>
<dbReference type="RefSeq" id="NP_001305324.1">
    <property type="nucleotide sequence ID" value="NM_001318395.1"/>
</dbReference>
<dbReference type="RefSeq" id="NP_114154.1">
    <property type="nucleotide sequence ID" value="NM_031948.5"/>
</dbReference>
<dbReference type="SMR" id="Q9BQR3"/>
<dbReference type="BioGRID" id="123797">
    <property type="interactions" value="2"/>
</dbReference>
<dbReference type="FunCoup" id="Q9BQR3">
    <property type="interactions" value="79"/>
</dbReference>
<dbReference type="IntAct" id="Q9BQR3">
    <property type="interactions" value="1"/>
</dbReference>
<dbReference type="STRING" id="9606.ENSP00000306390"/>
<dbReference type="MEROPS" id="S01.074"/>
<dbReference type="GlyCosmos" id="Q9BQR3">
    <property type="glycosylation" value="2 sites, No reported glycans"/>
</dbReference>
<dbReference type="GlyGen" id="Q9BQR3">
    <property type="glycosylation" value="2 sites"/>
</dbReference>
<dbReference type="iPTMnet" id="Q9BQR3"/>
<dbReference type="PhosphoSitePlus" id="Q9BQR3"/>
<dbReference type="BioMuta" id="PRSS27"/>
<dbReference type="DMDM" id="18202734"/>
<dbReference type="jPOST" id="Q9BQR3"/>
<dbReference type="MassIVE" id="Q9BQR3"/>
<dbReference type="PaxDb" id="9606-ENSP00000306390"/>
<dbReference type="PeptideAtlas" id="Q9BQR3"/>
<dbReference type="ProteomicsDB" id="78710"/>
<dbReference type="Antibodypedia" id="23859">
    <property type="antibodies" value="220 antibodies from 24 providers"/>
</dbReference>
<dbReference type="DNASU" id="83886"/>
<dbReference type="Ensembl" id="ENST00000302641.8">
    <property type="protein sequence ID" value="ENSP00000306390.3"/>
    <property type="gene ID" value="ENSG00000172382.10"/>
</dbReference>
<dbReference type="GeneID" id="83886"/>
<dbReference type="KEGG" id="hsa:83886"/>
<dbReference type="MANE-Select" id="ENST00000302641.8">
    <property type="protein sequence ID" value="ENSP00000306390.3"/>
    <property type="RefSeq nucleotide sequence ID" value="NM_031948.5"/>
    <property type="RefSeq protein sequence ID" value="NP_114154.1"/>
</dbReference>
<dbReference type="UCSC" id="uc002crf.4">
    <property type="organism name" value="human"/>
</dbReference>
<dbReference type="AGR" id="HGNC:15475"/>
<dbReference type="CTD" id="83886"/>
<dbReference type="DisGeNET" id="83886"/>
<dbReference type="GeneCards" id="PRSS27"/>
<dbReference type="HGNC" id="HGNC:15475">
    <property type="gene designation" value="PRSS27"/>
</dbReference>
<dbReference type="HPA" id="ENSG00000172382">
    <property type="expression patterns" value="Tissue enhanced (cervix, esophagus, vagina)"/>
</dbReference>
<dbReference type="MIM" id="608018">
    <property type="type" value="gene"/>
</dbReference>
<dbReference type="neXtProt" id="NX_Q9BQR3"/>
<dbReference type="OpenTargets" id="ENSG00000172382"/>
<dbReference type="PharmGKB" id="PA33837"/>
<dbReference type="VEuPathDB" id="HostDB:ENSG00000172382"/>
<dbReference type="eggNOG" id="KOG3627">
    <property type="taxonomic scope" value="Eukaryota"/>
</dbReference>
<dbReference type="GeneTree" id="ENSGT00940000162015"/>
<dbReference type="HOGENOM" id="CLU_006842_0_4_1"/>
<dbReference type="InParanoid" id="Q9BQR3"/>
<dbReference type="OMA" id="PVCMPDP"/>
<dbReference type="OrthoDB" id="546450at2759"/>
<dbReference type="PAN-GO" id="Q9BQR3">
    <property type="GO annotations" value="0 GO annotations based on evolutionary models"/>
</dbReference>
<dbReference type="PhylomeDB" id="Q9BQR3"/>
<dbReference type="TreeFam" id="TF351676"/>
<dbReference type="PathwayCommons" id="Q9BQR3"/>
<dbReference type="SignaLink" id="Q9BQR3"/>
<dbReference type="BioGRID-ORCS" id="83886">
    <property type="hits" value="24 hits in 1144 CRISPR screens"/>
</dbReference>
<dbReference type="GenomeRNAi" id="83886"/>
<dbReference type="Pharos" id="Q9BQR3">
    <property type="development level" value="Tbio"/>
</dbReference>
<dbReference type="PRO" id="PR:Q9BQR3"/>
<dbReference type="Proteomes" id="UP000005640">
    <property type="component" value="Chromosome 16"/>
</dbReference>
<dbReference type="RNAct" id="Q9BQR3">
    <property type="molecule type" value="protein"/>
</dbReference>
<dbReference type="Bgee" id="ENSG00000172382">
    <property type="expression patterns" value="Expressed in lower esophagus mucosa and 105 other cell types or tissues"/>
</dbReference>
<dbReference type="ExpressionAtlas" id="Q9BQR3">
    <property type="expression patterns" value="baseline and differential"/>
</dbReference>
<dbReference type="GO" id="GO:0005576">
    <property type="term" value="C:extracellular region"/>
    <property type="evidence" value="ECO:0007669"/>
    <property type="project" value="UniProtKB-SubCell"/>
</dbReference>
<dbReference type="GO" id="GO:0005886">
    <property type="term" value="C:plasma membrane"/>
    <property type="evidence" value="ECO:0007669"/>
    <property type="project" value="Ensembl"/>
</dbReference>
<dbReference type="GO" id="GO:0004252">
    <property type="term" value="F:serine-type endopeptidase activity"/>
    <property type="evidence" value="ECO:0007669"/>
    <property type="project" value="InterPro"/>
</dbReference>
<dbReference type="GO" id="GO:0006508">
    <property type="term" value="P:proteolysis"/>
    <property type="evidence" value="ECO:0007669"/>
    <property type="project" value="UniProtKB-KW"/>
</dbReference>
<dbReference type="CDD" id="cd00190">
    <property type="entry name" value="Tryp_SPc"/>
    <property type="match status" value="1"/>
</dbReference>
<dbReference type="FunFam" id="2.40.10.10:FF:000039">
    <property type="entry name" value="Brain-specific serine protease 4"/>
    <property type="match status" value="1"/>
</dbReference>
<dbReference type="Gene3D" id="2.40.10.10">
    <property type="entry name" value="Trypsin-like serine proteases"/>
    <property type="match status" value="2"/>
</dbReference>
<dbReference type="InterPro" id="IPR009003">
    <property type="entry name" value="Peptidase_S1_PA"/>
</dbReference>
<dbReference type="InterPro" id="IPR043504">
    <property type="entry name" value="Peptidase_S1_PA_chymotrypsin"/>
</dbReference>
<dbReference type="InterPro" id="IPR001314">
    <property type="entry name" value="Peptidase_S1A"/>
</dbReference>
<dbReference type="InterPro" id="IPR001254">
    <property type="entry name" value="Trypsin_dom"/>
</dbReference>
<dbReference type="InterPro" id="IPR018114">
    <property type="entry name" value="TRYPSIN_HIS"/>
</dbReference>
<dbReference type="InterPro" id="IPR033116">
    <property type="entry name" value="TRYPSIN_SER"/>
</dbReference>
<dbReference type="PANTHER" id="PTHR24253:SF119">
    <property type="entry name" value="SERINE PROTEASE 27"/>
    <property type="match status" value="1"/>
</dbReference>
<dbReference type="PANTHER" id="PTHR24253">
    <property type="entry name" value="TRANSMEMBRANE PROTEASE SERINE"/>
    <property type="match status" value="1"/>
</dbReference>
<dbReference type="Pfam" id="PF00089">
    <property type="entry name" value="Trypsin"/>
    <property type="match status" value="1"/>
</dbReference>
<dbReference type="PRINTS" id="PR00722">
    <property type="entry name" value="CHYMOTRYPSIN"/>
</dbReference>
<dbReference type="SMART" id="SM00020">
    <property type="entry name" value="Tryp_SPc"/>
    <property type="match status" value="1"/>
</dbReference>
<dbReference type="SUPFAM" id="SSF50494">
    <property type="entry name" value="Trypsin-like serine proteases"/>
    <property type="match status" value="1"/>
</dbReference>
<dbReference type="PROSITE" id="PS50240">
    <property type="entry name" value="TRYPSIN_DOM"/>
    <property type="match status" value="1"/>
</dbReference>
<dbReference type="PROSITE" id="PS00134">
    <property type="entry name" value="TRYPSIN_HIS"/>
    <property type="match status" value="1"/>
</dbReference>
<dbReference type="PROSITE" id="PS00135">
    <property type="entry name" value="TRYPSIN_SER"/>
    <property type="match status" value="1"/>
</dbReference>
<gene>
    <name type="primary">PRSS27</name>
    <name type="synonym">MPN</name>
    <name type="ORF">UNQ1884/PRO4327</name>
</gene>
<name>PRS27_HUMAN</name>
<keyword id="KW-1015">Disulfide bond</keyword>
<keyword id="KW-0325">Glycoprotein</keyword>
<keyword id="KW-0378">Hydrolase</keyword>
<keyword id="KW-0645">Protease</keyword>
<keyword id="KW-1267">Proteomics identification</keyword>
<keyword id="KW-1185">Reference proteome</keyword>
<keyword id="KW-0964">Secreted</keyword>
<keyword id="KW-0720">Serine protease</keyword>
<keyword id="KW-0732">Signal</keyword>
<keyword id="KW-0865">Zymogen</keyword>
<protein>
    <recommendedName>
        <fullName>Serine protease 27</fullName>
        <ecNumber>3.4.21.-</ecNumber>
    </recommendedName>
    <alternativeName>
        <fullName>Marapsin</fullName>
    </alternativeName>
    <alternativeName>
        <fullName>Pancreasin</fullName>
    </alternativeName>
</protein>
<reference key="1">
    <citation type="submission" date="2001-03" db="EMBL/GenBank/DDBJ databases">
        <title>Cloning, sequencing and expression of marapsin, a human serine proteinase.</title>
        <authorList>
            <person name="Fortunato M."/>
            <person name="Dando P.M."/>
            <person name="Rawlings N.D."/>
            <person name="Barrett A.J."/>
        </authorList>
    </citation>
    <scope>NUCLEOTIDE SEQUENCE [MRNA]</scope>
</reference>
<reference key="2">
    <citation type="submission" date="2001-02" db="EMBL/GenBank/DDBJ databases">
        <authorList>
            <person name="Okaze H."/>
            <person name="Hayashi A."/>
            <person name="Kozuma S."/>
            <person name="Saito T."/>
        </authorList>
    </citation>
    <scope>NUCLEOTIDE SEQUENCE [MRNA]</scope>
</reference>
<reference key="3">
    <citation type="journal article" date="2003" name="J. Biol. Chem.">
        <title>Structure and activity of human pancreasin, a novel tryptic serine peptidase expressed primarily by the pancreas.</title>
        <authorList>
            <person name="Bhagwandin V.J."/>
            <person name="Hau L.W.-T."/>
            <person name="Mallen-St Clair J."/>
            <person name="Wolters P.J."/>
            <person name="Caughey G.H."/>
        </authorList>
    </citation>
    <scope>NUCLEOTIDE SEQUENCE [MRNA]</scope>
    <scope>GLYCOSYLATION</scope>
    <scope>TISSUE SPECIFICITY</scope>
</reference>
<reference key="4">
    <citation type="journal article" date="2003" name="Genome Res.">
        <title>The secreted protein discovery initiative (SPDI), a large-scale effort to identify novel human secreted and transmembrane proteins: a bioinformatics assessment.</title>
        <authorList>
            <person name="Clark H.F."/>
            <person name="Gurney A.L."/>
            <person name="Abaya E."/>
            <person name="Baker K."/>
            <person name="Baldwin D.T."/>
            <person name="Brush J."/>
            <person name="Chen J."/>
            <person name="Chow B."/>
            <person name="Chui C."/>
            <person name="Crowley C."/>
            <person name="Currell B."/>
            <person name="Deuel B."/>
            <person name="Dowd P."/>
            <person name="Eaton D."/>
            <person name="Foster J.S."/>
            <person name="Grimaldi C."/>
            <person name="Gu Q."/>
            <person name="Hass P.E."/>
            <person name="Heldens S."/>
            <person name="Huang A."/>
            <person name="Kim H.S."/>
            <person name="Klimowski L."/>
            <person name="Jin Y."/>
            <person name="Johnson S."/>
            <person name="Lee J."/>
            <person name="Lewis L."/>
            <person name="Liao D."/>
            <person name="Mark M.R."/>
            <person name="Robbie E."/>
            <person name="Sanchez C."/>
            <person name="Schoenfeld J."/>
            <person name="Seshagiri S."/>
            <person name="Simmons L."/>
            <person name="Singh J."/>
            <person name="Smith V."/>
            <person name="Stinson J."/>
            <person name="Vagts A."/>
            <person name="Vandlen R.L."/>
            <person name="Watanabe C."/>
            <person name="Wieand D."/>
            <person name="Woods K."/>
            <person name="Xie M.-H."/>
            <person name="Yansura D.G."/>
            <person name="Yi S."/>
            <person name="Yu G."/>
            <person name="Yuan J."/>
            <person name="Zhang M."/>
            <person name="Zhang Z."/>
            <person name="Goddard A.D."/>
            <person name="Wood W.I."/>
            <person name="Godowski P.J."/>
            <person name="Gray A.M."/>
        </authorList>
    </citation>
    <scope>NUCLEOTIDE SEQUENCE [LARGE SCALE MRNA]</scope>
</reference>
<reference key="5">
    <citation type="journal article" date="2004" name="Genome Res.">
        <title>The status, quality, and expansion of the NIH full-length cDNA project: the Mammalian Gene Collection (MGC).</title>
        <authorList>
            <consortium name="The MGC Project Team"/>
        </authorList>
    </citation>
    <scope>NUCLEOTIDE SEQUENCE [LARGE SCALE MRNA]</scope>
    <source>
        <tissue>Skin</tissue>
    </source>
</reference>
<comment type="subcellular location">
    <subcellularLocation>
        <location>Secreted</location>
    </subcellularLocation>
</comment>
<comment type="tissue specificity">
    <text evidence="4">Expressed predominantly in the pancreas.</text>
</comment>
<comment type="PTM">
    <text evidence="4">N-glycosylated.</text>
</comment>
<comment type="similarity">
    <text evidence="3">Belongs to the peptidase S1 family.</text>
</comment>
<sequence length="290" mass="31940">MRRPAAVPLLLLLCFGSQRAKAATACGRPRMLNRMVGGQDTQEGEWPWQVSIQRNGSHFCGGSLIAEQWVLTAAHCFRNTSETSLYQVLLGARQLVQPGPHAMYARVRQVESNPLYQGTASSADVALVELEAPVPFTNYILPVCLPDPSVIFETGMNCWVTGWGSPSEEDLLPEPRILQKLAVPIIDTPKCNLLYSKDTEFGYQPKTIKNDMLCAGFEEGKKDACKGDSGGPLVCLVGQSWLQAGVISWGEGCARQNRPGVYIRVTAHHNWIHRIIPKLQFQPARLGGQK</sequence>
<feature type="signal peptide" evidence="2">
    <location>
        <begin position="1"/>
        <end position="22"/>
    </location>
</feature>
<feature type="propeptide" id="PRO_0000027506" description="Activation peptide" evidence="2">
    <location>
        <begin position="23"/>
        <end position="34"/>
    </location>
</feature>
<feature type="chain" id="PRO_0000027507" description="Serine protease 27">
    <location>
        <begin position="35"/>
        <end position="290"/>
    </location>
</feature>
<feature type="domain" description="Peptidase S1" evidence="3">
    <location>
        <begin position="35"/>
        <end position="277"/>
    </location>
</feature>
<feature type="active site" description="Charge relay system" evidence="1">
    <location>
        <position position="75"/>
    </location>
</feature>
<feature type="active site" description="Charge relay system" evidence="1">
    <location>
        <position position="124"/>
    </location>
</feature>
<feature type="active site" description="Charge relay system" evidence="1">
    <location>
        <position position="229"/>
    </location>
</feature>
<feature type="glycosylation site" description="N-linked (GlcNAc...) asparagine" evidence="2">
    <location>
        <position position="55"/>
    </location>
</feature>
<feature type="glycosylation site" description="N-linked (GlcNAc...) asparagine" evidence="2">
    <location>
        <position position="79"/>
    </location>
</feature>
<feature type="disulfide bond" evidence="3">
    <location>
        <begin position="60"/>
        <end position="76"/>
    </location>
</feature>
<feature type="disulfide bond" evidence="3">
    <location>
        <begin position="158"/>
        <end position="235"/>
    </location>
</feature>
<feature type="disulfide bond" evidence="3">
    <location>
        <begin position="191"/>
        <end position="214"/>
    </location>
</feature>
<feature type="disulfide bond" evidence="3">
    <location>
        <begin position="225"/>
        <end position="253"/>
    </location>
</feature>
<evidence type="ECO:0000250" key="1"/>
<evidence type="ECO:0000255" key="2"/>
<evidence type="ECO:0000255" key="3">
    <source>
        <dbReference type="PROSITE-ProRule" id="PRU00274"/>
    </source>
</evidence>
<evidence type="ECO:0000269" key="4">
    <source>
    </source>
</evidence>
<accession>Q9BQR3</accession>
<proteinExistence type="evidence at protein level"/>
<organism>
    <name type="scientific">Homo sapiens</name>
    <name type="common">Human</name>
    <dbReference type="NCBI Taxonomy" id="9606"/>
    <lineage>
        <taxon>Eukaryota</taxon>
        <taxon>Metazoa</taxon>
        <taxon>Chordata</taxon>
        <taxon>Craniata</taxon>
        <taxon>Vertebrata</taxon>
        <taxon>Euteleostomi</taxon>
        <taxon>Mammalia</taxon>
        <taxon>Eutheria</taxon>
        <taxon>Euarchontoglires</taxon>
        <taxon>Primates</taxon>
        <taxon>Haplorrhini</taxon>
        <taxon>Catarrhini</taxon>
        <taxon>Hominidae</taxon>
        <taxon>Homo</taxon>
    </lineage>
</organism>